<protein>
    <recommendedName>
        <fullName evidence="1">Protein-L-isoaspartate O-methyltransferase</fullName>
        <ecNumber evidence="1">2.1.1.77</ecNumber>
    </recommendedName>
    <alternativeName>
        <fullName evidence="1">L-isoaspartyl protein carboxyl methyltransferase</fullName>
    </alternativeName>
    <alternativeName>
        <fullName evidence="1">Protein L-isoaspartyl methyltransferase</fullName>
    </alternativeName>
    <alternativeName>
        <fullName evidence="1">Protein-beta-aspartate methyltransferase</fullName>
        <shortName evidence="1">PIMT</shortName>
    </alternativeName>
</protein>
<comment type="function">
    <text evidence="1">Catalyzes the methyl esterification of L-isoaspartyl residues in peptides and proteins that result from spontaneous decomposition of normal L-aspartyl and L-asparaginyl residues. It plays a role in the repair and/or degradation of damaged proteins.</text>
</comment>
<comment type="catalytic activity">
    <reaction evidence="1">
        <text>[protein]-L-isoaspartate + S-adenosyl-L-methionine = [protein]-L-isoaspartate alpha-methyl ester + S-adenosyl-L-homocysteine</text>
        <dbReference type="Rhea" id="RHEA:12705"/>
        <dbReference type="Rhea" id="RHEA-COMP:12143"/>
        <dbReference type="Rhea" id="RHEA-COMP:12144"/>
        <dbReference type="ChEBI" id="CHEBI:57856"/>
        <dbReference type="ChEBI" id="CHEBI:59789"/>
        <dbReference type="ChEBI" id="CHEBI:90596"/>
        <dbReference type="ChEBI" id="CHEBI:90598"/>
        <dbReference type="EC" id="2.1.1.77"/>
    </reaction>
</comment>
<comment type="subcellular location">
    <subcellularLocation>
        <location evidence="1">Cytoplasm</location>
    </subcellularLocation>
</comment>
<comment type="similarity">
    <text evidence="1">Belongs to the methyltransferase superfamily. L-isoaspartyl/D-aspartyl protein methyltransferase family.</text>
</comment>
<feature type="chain" id="PRO_1000192388" description="Protein-L-isoaspartate O-methyltransferase">
    <location>
        <begin position="1"/>
        <end position="215"/>
    </location>
</feature>
<feature type="active site" evidence="1">
    <location>
        <position position="62"/>
    </location>
</feature>
<name>PIMT_NITV9</name>
<dbReference type="EC" id="2.1.1.77" evidence="1"/>
<dbReference type="EMBL" id="CP001197">
    <property type="protein sequence ID" value="ACL07369.1"/>
    <property type="molecule type" value="Genomic_DNA"/>
</dbReference>
<dbReference type="SMR" id="B8DJP7"/>
<dbReference type="STRING" id="883.DvMF_0412"/>
<dbReference type="KEGG" id="dvm:DvMF_0412"/>
<dbReference type="eggNOG" id="COG2518">
    <property type="taxonomic scope" value="Bacteria"/>
</dbReference>
<dbReference type="HOGENOM" id="CLU_055432_2_0_7"/>
<dbReference type="GO" id="GO:0005737">
    <property type="term" value="C:cytoplasm"/>
    <property type="evidence" value="ECO:0007669"/>
    <property type="project" value="UniProtKB-SubCell"/>
</dbReference>
<dbReference type="GO" id="GO:0004719">
    <property type="term" value="F:protein-L-isoaspartate (D-aspartate) O-methyltransferase activity"/>
    <property type="evidence" value="ECO:0007669"/>
    <property type="project" value="UniProtKB-UniRule"/>
</dbReference>
<dbReference type="GO" id="GO:0032259">
    <property type="term" value="P:methylation"/>
    <property type="evidence" value="ECO:0007669"/>
    <property type="project" value="UniProtKB-KW"/>
</dbReference>
<dbReference type="GO" id="GO:0036211">
    <property type="term" value="P:protein modification process"/>
    <property type="evidence" value="ECO:0007669"/>
    <property type="project" value="UniProtKB-UniRule"/>
</dbReference>
<dbReference type="GO" id="GO:0030091">
    <property type="term" value="P:protein repair"/>
    <property type="evidence" value="ECO:0007669"/>
    <property type="project" value="UniProtKB-UniRule"/>
</dbReference>
<dbReference type="CDD" id="cd02440">
    <property type="entry name" value="AdoMet_MTases"/>
    <property type="match status" value="1"/>
</dbReference>
<dbReference type="FunFam" id="3.40.50.150:FF:000010">
    <property type="entry name" value="Protein-L-isoaspartate O-methyltransferase"/>
    <property type="match status" value="1"/>
</dbReference>
<dbReference type="Gene3D" id="3.40.50.150">
    <property type="entry name" value="Vaccinia Virus protein VP39"/>
    <property type="match status" value="1"/>
</dbReference>
<dbReference type="HAMAP" id="MF_00090">
    <property type="entry name" value="PIMT"/>
    <property type="match status" value="1"/>
</dbReference>
<dbReference type="InterPro" id="IPR000682">
    <property type="entry name" value="PCMT"/>
</dbReference>
<dbReference type="InterPro" id="IPR029063">
    <property type="entry name" value="SAM-dependent_MTases_sf"/>
</dbReference>
<dbReference type="NCBIfam" id="TIGR00080">
    <property type="entry name" value="pimt"/>
    <property type="match status" value="1"/>
</dbReference>
<dbReference type="NCBIfam" id="NF001453">
    <property type="entry name" value="PRK00312.1"/>
    <property type="match status" value="1"/>
</dbReference>
<dbReference type="PANTHER" id="PTHR11579">
    <property type="entry name" value="PROTEIN-L-ISOASPARTATE O-METHYLTRANSFERASE"/>
    <property type="match status" value="1"/>
</dbReference>
<dbReference type="PANTHER" id="PTHR11579:SF0">
    <property type="entry name" value="PROTEIN-L-ISOASPARTATE(D-ASPARTATE) O-METHYLTRANSFERASE"/>
    <property type="match status" value="1"/>
</dbReference>
<dbReference type="Pfam" id="PF01135">
    <property type="entry name" value="PCMT"/>
    <property type="match status" value="1"/>
</dbReference>
<dbReference type="SUPFAM" id="SSF53335">
    <property type="entry name" value="S-adenosyl-L-methionine-dependent methyltransferases"/>
    <property type="match status" value="1"/>
</dbReference>
<dbReference type="PROSITE" id="PS01279">
    <property type="entry name" value="PCMT"/>
    <property type="match status" value="1"/>
</dbReference>
<gene>
    <name evidence="1" type="primary">pcm</name>
    <name type="ordered locus">DvMF_0412</name>
</gene>
<organism>
    <name type="scientific">Nitratidesulfovibrio vulgaris (strain DSM 19637 / Miyazaki F)</name>
    <name type="common">Desulfovibrio vulgaris</name>
    <dbReference type="NCBI Taxonomy" id="883"/>
    <lineage>
        <taxon>Bacteria</taxon>
        <taxon>Pseudomonadati</taxon>
        <taxon>Thermodesulfobacteriota</taxon>
        <taxon>Desulfovibrionia</taxon>
        <taxon>Desulfovibrionales</taxon>
        <taxon>Desulfovibrionaceae</taxon>
        <taxon>Nitratidesulfovibrio</taxon>
    </lineage>
</organism>
<sequence length="215" mass="23764">MLDMKRNRERMVKQQLETRGITDPAVLAAMRSVPRHLFVQEALRAQAYEDHPLPIGYGQTISQPFIVALMSQIIEPQPGLRVLEIGTGSGYQAAVLAEMGLDVYTVERIRELHAAARDLLRTLKYRKVRLKLDDGTLGWPEAAPYDRILVTAGGPEVPLPLIEQLADPGIMVIPVGASKRMQELVVVRKQGGRVVRESKGGVAFVDLVGTHGWRG</sequence>
<reference key="1">
    <citation type="submission" date="2008-10" db="EMBL/GenBank/DDBJ databases">
        <title>Complete sequence of Desulfovibrio vulgaris str. 'Miyazaki F'.</title>
        <authorList>
            <person name="Lucas S."/>
            <person name="Copeland A."/>
            <person name="Lapidus A."/>
            <person name="Glavina del Rio T."/>
            <person name="Dalin E."/>
            <person name="Tice H."/>
            <person name="Bruce D."/>
            <person name="Goodwin L."/>
            <person name="Pitluck S."/>
            <person name="Sims D."/>
            <person name="Brettin T."/>
            <person name="Detter J.C."/>
            <person name="Han C."/>
            <person name="Larimer F."/>
            <person name="Land M."/>
            <person name="Hauser L."/>
            <person name="Kyrpides N."/>
            <person name="Mikhailova N."/>
            <person name="Hazen T.C."/>
            <person name="Richardson P."/>
        </authorList>
    </citation>
    <scope>NUCLEOTIDE SEQUENCE [LARGE SCALE GENOMIC DNA]</scope>
    <source>
        <strain>DSM 19637 / Miyazaki F</strain>
    </source>
</reference>
<accession>B8DJP7</accession>
<evidence type="ECO:0000255" key="1">
    <source>
        <dbReference type="HAMAP-Rule" id="MF_00090"/>
    </source>
</evidence>
<keyword id="KW-0963">Cytoplasm</keyword>
<keyword id="KW-0489">Methyltransferase</keyword>
<keyword id="KW-0949">S-adenosyl-L-methionine</keyword>
<keyword id="KW-0808">Transferase</keyword>
<proteinExistence type="inferred from homology"/>